<proteinExistence type="evidence at protein level"/>
<gene>
    <name type="primary">mrps18</name>
    <name type="ORF">NCU03230</name>
</gene>
<keyword id="KW-0002">3D-structure</keyword>
<keyword id="KW-0496">Mitochondrion</keyword>
<keyword id="KW-1185">Reference proteome</keyword>
<keyword id="KW-0687">Ribonucleoprotein</keyword>
<keyword id="KW-0689">Ribosomal protein</keyword>
<organism>
    <name type="scientific">Neurospora crassa (strain ATCC 24698 / 74-OR23-1A / CBS 708.71 / DSM 1257 / FGSC 987)</name>
    <dbReference type="NCBI Taxonomy" id="367110"/>
    <lineage>
        <taxon>Eukaryota</taxon>
        <taxon>Fungi</taxon>
        <taxon>Dikarya</taxon>
        <taxon>Ascomycota</taxon>
        <taxon>Pezizomycotina</taxon>
        <taxon>Sordariomycetes</taxon>
        <taxon>Sordariomycetidae</taxon>
        <taxon>Sordariales</taxon>
        <taxon>Sordariaceae</taxon>
        <taxon>Neurospora</taxon>
    </lineage>
</organism>
<feature type="chain" id="PRO_0000458574" description="Small ribosomal subunit protein uS11m">
    <location>
        <begin position="1"/>
        <end position="376"/>
    </location>
</feature>
<reference key="1">
    <citation type="journal article" date="2003" name="Nature">
        <title>The genome sequence of the filamentous fungus Neurospora crassa.</title>
        <authorList>
            <person name="Galagan J.E."/>
            <person name="Calvo S.E."/>
            <person name="Borkovich K.A."/>
            <person name="Selker E.U."/>
            <person name="Read N.D."/>
            <person name="Jaffe D.B."/>
            <person name="FitzHugh W."/>
            <person name="Ma L.-J."/>
            <person name="Smirnov S."/>
            <person name="Purcell S."/>
            <person name="Rehman B."/>
            <person name="Elkins T."/>
            <person name="Engels R."/>
            <person name="Wang S."/>
            <person name="Nielsen C.B."/>
            <person name="Butler J."/>
            <person name="Endrizzi M."/>
            <person name="Qui D."/>
            <person name="Ianakiev P."/>
            <person name="Bell-Pedersen D."/>
            <person name="Nelson M.A."/>
            <person name="Werner-Washburne M."/>
            <person name="Selitrennikoff C.P."/>
            <person name="Kinsey J.A."/>
            <person name="Braun E.L."/>
            <person name="Zelter A."/>
            <person name="Schulte U."/>
            <person name="Kothe G.O."/>
            <person name="Jedd G."/>
            <person name="Mewes H.-W."/>
            <person name="Staben C."/>
            <person name="Marcotte E."/>
            <person name="Greenberg D."/>
            <person name="Roy A."/>
            <person name="Foley K."/>
            <person name="Naylor J."/>
            <person name="Stange-Thomann N."/>
            <person name="Barrett R."/>
            <person name="Gnerre S."/>
            <person name="Kamal M."/>
            <person name="Kamvysselis M."/>
            <person name="Mauceli E.W."/>
            <person name="Bielke C."/>
            <person name="Rudd S."/>
            <person name="Frishman D."/>
            <person name="Krystofova S."/>
            <person name="Rasmussen C."/>
            <person name="Metzenberg R.L."/>
            <person name="Perkins D.D."/>
            <person name="Kroken S."/>
            <person name="Cogoni C."/>
            <person name="Macino G."/>
            <person name="Catcheside D.E.A."/>
            <person name="Li W."/>
            <person name="Pratt R.J."/>
            <person name="Osmani S.A."/>
            <person name="DeSouza C.P.C."/>
            <person name="Glass N.L."/>
            <person name="Orbach M.J."/>
            <person name="Berglund J.A."/>
            <person name="Voelker R."/>
            <person name="Yarden O."/>
            <person name="Plamann M."/>
            <person name="Seiler S."/>
            <person name="Dunlap J.C."/>
            <person name="Radford A."/>
            <person name="Aramayo R."/>
            <person name="Natvig D.O."/>
            <person name="Alex L.A."/>
            <person name="Mannhaupt G."/>
            <person name="Ebbole D.J."/>
            <person name="Freitag M."/>
            <person name="Paulsen I."/>
            <person name="Sachs M.S."/>
            <person name="Lander E.S."/>
            <person name="Nusbaum C."/>
            <person name="Birren B.W."/>
        </authorList>
    </citation>
    <scope>NUCLEOTIDE SEQUENCE [LARGE SCALE GENOMIC DNA]</scope>
    <source>
        <strain>ATCC 24698 / 74-OR23-1A / CBS 708.71 / DSM 1257 / FGSC 987</strain>
    </source>
</reference>
<reference evidence="5 6" key="2">
    <citation type="journal article" date="2020" name="Nat. Commun.">
        <title>Analysis of translating mitoribosome reveals functional characteristics of translation in mitochondria of fungi.</title>
        <authorList>
            <person name="Itoh Y."/>
            <person name="Naschberger A."/>
            <person name="Mortezaei N."/>
            <person name="Herrmann J.M."/>
            <person name="Amunts A."/>
        </authorList>
    </citation>
    <scope>STRUCTURE BY ELECTRON MICROSCOPY (2.85 ANGSTROMS)</scope>
</reference>
<sequence length="376" mass="42089">MAGQIDPIRAELVGWTPRVPRNLLASLPPLGRKTAPKLPQNISFSPPLSAHPCYQCQEKCLPHRRPVSWSPLILQRCRLRCLPRGHPLKISRTFELPVGERDGSHPLTAFARAPRTTEPRSLHYLYDSLPPTPALCAQLLFHQLIQGHFSFVVHPTVATAPRSIWPAKMSRFSTGRLLAQNLFQAFNKPVFPSATPVWTRAFSQTAARRDADSESSAKLMESLTRGIVGMAADPTDLTGDKLATNIGLRDTEDEPYHFHIYSHKHNTHITVTKPNRDALISLSCGNLGFKKSNRKHYDSAYQLGAYVVDKMHQMNLHNKIKKMEVVLRGFGPGREAVIKVLLGNEGRMLRSSIVRVSDATRLKFGGTRSKKPRRLG</sequence>
<comment type="function">
    <text evidence="4">Component of the mitochondrial ribosome (mitoribosome), a dedicated translation machinery responsible for the synthesis of mitochondrial genome-encoded proteins, including at least some of the essential transmembrane subunits of the mitochondrial respiratory chain. The mitoribosomes are attached to the mitochondrial inner membrane and translation products are cotranslationally integrated into the membrane.</text>
</comment>
<comment type="subunit">
    <text evidence="1">Component of the mitochondrial small ribosomal subunit (mt-SSU). Mature N.crassa 74S mitochondrial ribosomes consist of a small (37S) and a large (54S) subunit. The 37S small subunit contains a 16S ribosomal RNA (16S mt-rRNA) and 32 different proteins. The 54S large subunit contains a 23S rRNA (23S mt-rRNA) and 42 different proteins.</text>
</comment>
<comment type="subcellular location">
    <subcellularLocation>
        <location evidence="1">Mitochondrion</location>
    </subcellularLocation>
</comment>
<comment type="similarity">
    <text evidence="3">Belongs to the universal ribosomal protein uS11 family.</text>
</comment>
<accession>Q7SGU0</accession>
<protein>
    <recommendedName>
        <fullName evidence="2">Small ribosomal subunit protein uS11m</fullName>
    </recommendedName>
</protein>
<dbReference type="EMBL" id="CM002236">
    <property type="protein sequence ID" value="EAA36094.1"/>
    <property type="molecule type" value="Genomic_DNA"/>
</dbReference>
<dbReference type="RefSeq" id="XP_965330.1">
    <property type="nucleotide sequence ID" value="XM_960237.2"/>
</dbReference>
<dbReference type="PDB" id="6YW5">
    <property type="method" value="EM"/>
    <property type="resolution" value="2.85 A"/>
    <property type="chains" value="KK=1-376"/>
</dbReference>
<dbReference type="PDB" id="6YWX">
    <property type="method" value="EM"/>
    <property type="resolution" value="3.10 A"/>
    <property type="chains" value="KK=1-376"/>
</dbReference>
<dbReference type="PDBsum" id="6YW5"/>
<dbReference type="PDBsum" id="6YWX"/>
<dbReference type="EMDB" id="EMD-10958"/>
<dbReference type="EMDB" id="EMD-10978"/>
<dbReference type="SMR" id="Q7SGU0"/>
<dbReference type="STRING" id="367110.Q7SGU0"/>
<dbReference type="PaxDb" id="5141-EFNCRP00000002783"/>
<dbReference type="EnsemblFungi" id="EAA36094">
    <property type="protein sequence ID" value="EAA36094"/>
    <property type="gene ID" value="NCU03230"/>
</dbReference>
<dbReference type="GeneID" id="3881479"/>
<dbReference type="KEGG" id="ncr:NCU03230"/>
<dbReference type="VEuPathDB" id="FungiDB:NCU03230"/>
<dbReference type="HOGENOM" id="CLU_774092_0_0_1"/>
<dbReference type="InParanoid" id="Q7SGU0"/>
<dbReference type="OMA" id="WTRAFSQ"/>
<dbReference type="OrthoDB" id="1654884at2759"/>
<dbReference type="Proteomes" id="UP000001805">
    <property type="component" value="Chromosome 1, Linkage Group I"/>
</dbReference>
<dbReference type="GO" id="GO:0005763">
    <property type="term" value="C:mitochondrial small ribosomal subunit"/>
    <property type="evidence" value="ECO:0000318"/>
    <property type="project" value="GO_Central"/>
</dbReference>
<dbReference type="GO" id="GO:0003735">
    <property type="term" value="F:structural constituent of ribosome"/>
    <property type="evidence" value="ECO:0000318"/>
    <property type="project" value="GO_Central"/>
</dbReference>
<dbReference type="GO" id="GO:0006412">
    <property type="term" value="P:translation"/>
    <property type="evidence" value="ECO:0000318"/>
    <property type="project" value="GO_Central"/>
</dbReference>
<dbReference type="FunFam" id="3.30.420.80:FF:000011">
    <property type="entry name" value="37S ribosomal protein S18, mitochondrial"/>
    <property type="match status" value="1"/>
</dbReference>
<dbReference type="Gene3D" id="3.30.420.80">
    <property type="entry name" value="Ribosomal protein S11"/>
    <property type="match status" value="1"/>
</dbReference>
<dbReference type="HAMAP" id="MF_01310">
    <property type="entry name" value="Ribosomal_uS11"/>
    <property type="match status" value="1"/>
</dbReference>
<dbReference type="InterPro" id="IPR001971">
    <property type="entry name" value="Ribosomal_uS11"/>
</dbReference>
<dbReference type="InterPro" id="IPR036967">
    <property type="entry name" value="Ribosomal_uS11_sf"/>
</dbReference>
<dbReference type="PANTHER" id="PTHR11759">
    <property type="entry name" value="40S RIBOSOMAL PROTEIN S14/30S RIBOSOMAL PROTEIN S11"/>
    <property type="match status" value="1"/>
</dbReference>
<dbReference type="Pfam" id="PF00411">
    <property type="entry name" value="Ribosomal_S11"/>
    <property type="match status" value="1"/>
</dbReference>
<dbReference type="SUPFAM" id="SSF53137">
    <property type="entry name" value="Translational machinery components"/>
    <property type="match status" value="1"/>
</dbReference>
<evidence type="ECO:0000269" key="1">
    <source>
    </source>
</evidence>
<evidence type="ECO:0000303" key="2">
    <source>
    </source>
</evidence>
<evidence type="ECO:0000305" key="3"/>
<evidence type="ECO:0000305" key="4">
    <source>
    </source>
</evidence>
<evidence type="ECO:0007744" key="5">
    <source>
        <dbReference type="PDB" id="6YW5"/>
    </source>
</evidence>
<evidence type="ECO:0007744" key="6">
    <source>
        <dbReference type="PDB" id="6YWX"/>
    </source>
</evidence>
<name>RT18_NEUCR</name>